<organism>
    <name type="scientific">Centruroides elegans</name>
    <name type="common">Bark scorpion</name>
    <dbReference type="NCBI Taxonomy" id="217897"/>
    <lineage>
        <taxon>Eukaryota</taxon>
        <taxon>Metazoa</taxon>
        <taxon>Ecdysozoa</taxon>
        <taxon>Arthropoda</taxon>
        <taxon>Chelicerata</taxon>
        <taxon>Arachnida</taxon>
        <taxon>Scorpiones</taxon>
        <taxon>Buthida</taxon>
        <taxon>Buthoidea</taxon>
        <taxon>Buthidae</taxon>
        <taxon>Centruroides</taxon>
    </lineage>
</organism>
<reference key="1">
    <citation type="journal article" date="2008" name="Neurochem. Res.">
        <title>Two novel ergtoxins, blockers of K(+)-channels, purified from the Mexican scorpion Centruroides elegans elegans.</title>
        <authorList>
            <person name="Restano-Cassulini R."/>
            <person name="Olamendi-Portugal T."/>
            <person name="Zamudio F."/>
            <person name="Becerril B."/>
            <person name="Possani L.D."/>
        </authorList>
    </citation>
    <scope>PROTEIN SEQUENCE</scope>
    <scope>FUNCTION</scope>
    <scope>MASS SPECTROMETRY</scope>
    <scope>SUBCELLULAR LOCATION</scope>
    <scope>NOMENCLATURE</scope>
    <source>
        <tissue>Venom</tissue>
    </source>
</reference>
<reference key="2">
    <citation type="journal article" date="2018" name="Nat. Struct. Mol. Biol.">
        <title>Screening, large-scale production and structure-based classification of cystine-dense peptides.</title>
        <authorList>
            <person name="Correnti C.E."/>
            <person name="Gewe M.M."/>
            <person name="Mehlin C."/>
            <person name="Bandaranayake A.D."/>
            <person name="Johnsen W.A."/>
            <person name="Rupert P.B."/>
            <person name="Brusniak M.Y."/>
            <person name="Clarke M."/>
            <person name="Burke S.E."/>
            <person name="De Van Der Schueren W."/>
            <person name="Pilat K."/>
            <person name="Turnbaugh S.M."/>
            <person name="May D."/>
            <person name="Watson A."/>
            <person name="Chan M.K."/>
            <person name="Bahl C.D."/>
            <person name="Olson J.M."/>
            <person name="Strong R.K."/>
        </authorList>
    </citation>
    <scope>FUNCTION</scope>
    <scope>SYNTHESIS</scope>
</reference>
<dbReference type="SMR" id="P0C893"/>
<dbReference type="GO" id="GO:0005576">
    <property type="term" value="C:extracellular region"/>
    <property type="evidence" value="ECO:0007669"/>
    <property type="project" value="UniProtKB-SubCell"/>
</dbReference>
<dbReference type="GO" id="GO:0019870">
    <property type="term" value="F:potassium channel inhibitor activity"/>
    <property type="evidence" value="ECO:0007669"/>
    <property type="project" value="InterPro"/>
</dbReference>
<dbReference type="GO" id="GO:0090729">
    <property type="term" value="F:toxin activity"/>
    <property type="evidence" value="ECO:0007669"/>
    <property type="project" value="UniProtKB-KW"/>
</dbReference>
<dbReference type="Gene3D" id="3.30.30.10">
    <property type="entry name" value="Knottin, scorpion toxin-like"/>
    <property type="match status" value="1"/>
</dbReference>
<dbReference type="InterPro" id="IPR012622">
    <property type="entry name" value="Ergtoxin"/>
</dbReference>
<dbReference type="InterPro" id="IPR036574">
    <property type="entry name" value="Scorpion_toxin-like_sf"/>
</dbReference>
<dbReference type="Pfam" id="PF08086">
    <property type="entry name" value="Toxin_17"/>
    <property type="match status" value="1"/>
</dbReference>
<dbReference type="SUPFAM" id="SSF57095">
    <property type="entry name" value="Scorpion toxin-like"/>
    <property type="match status" value="1"/>
</dbReference>
<dbReference type="PROSITE" id="PS60026">
    <property type="entry name" value="ERGTX"/>
    <property type="match status" value="1"/>
</dbReference>
<comment type="function">
    <text evidence="2 3">Blocks in a reversible manner human and rat Kv11.1/KCNH2/ERG1 potassium channels (PubMed:18338253). Also completely and irreversibly blocks rat Kv11.2/KCNH6/ERG2 and human Kv11.3/KCNH7/ERG3 channels (PubMed:18338253). Also weakly inhibits Kir2.1/KCNJ2 and Kv1.2/KCNA2 potassium channels (PubMed:29483648).</text>
</comment>
<comment type="subcellular location">
    <subcellularLocation>
        <location evidence="2">Secreted</location>
    </subcellularLocation>
</comment>
<comment type="tissue specificity">
    <text evidence="6">Expressed by the venom gland.</text>
</comment>
<comment type="domain">
    <text evidence="1">The presence of a 'disulfide through disulfide knot' structurally defines this protein as a knottin.</text>
</comment>
<comment type="domain">
    <text evidence="1">Has the CSalpha/beta fold, which comprises one or two short alpha helices connected to anti-parallel beta-sheets stabilized by three or four disulfide bonds.</text>
</comment>
<comment type="mass spectrometry" mass="4775.0" method="Unknown" evidence="2"/>
<comment type="miscellaneous">
    <text evidence="2">Negative results: does not affect human Kv11.2/KCNH6/ERG2.</text>
</comment>
<comment type="similarity">
    <text evidence="5">Belongs to the ergtoxin family. Gamma-KTx 1 subfamily.</text>
</comment>
<feature type="chain" id="PRO_0000352491" description="Potassium channel toxin gamma-KTx 1.8" evidence="2">
    <location>
        <begin position="1"/>
        <end position="42"/>
    </location>
</feature>
<feature type="disulfide bond" evidence="1">
    <location>
        <begin position="5"/>
        <end position="23"/>
    </location>
</feature>
<feature type="disulfide bond" evidence="1">
    <location>
        <begin position="11"/>
        <end position="34"/>
    </location>
</feature>
<feature type="disulfide bond" evidence="1">
    <location>
        <begin position="20"/>
        <end position="39"/>
    </location>
</feature>
<feature type="disulfide bond" evidence="1">
    <location>
        <begin position="24"/>
        <end position="41"/>
    </location>
</feature>
<keyword id="KW-0903">Direct protein sequencing</keyword>
<keyword id="KW-1015">Disulfide bond</keyword>
<keyword id="KW-0872">Ion channel impairing toxin</keyword>
<keyword id="KW-0960">Knottin</keyword>
<keyword id="KW-0528">Neurotoxin</keyword>
<keyword id="KW-0632">Potassium channel impairing toxin</keyword>
<keyword id="KW-0964">Secreted</keyword>
<keyword id="KW-0800">Toxin</keyword>
<keyword id="KW-1220">Voltage-gated potassium channel impairing toxin</keyword>
<accession>P0C893</accession>
<protein>
    <recommendedName>
        <fullName evidence="4">Potassium channel toxin gamma-KTx 1.8</fullName>
    </recommendedName>
    <alternativeName>
        <fullName evidence="5">CeErgTx5</fullName>
        <shortName evidence="4">CeErg5</shortName>
    </alternativeName>
</protein>
<sequence length="42" mass="4782">DRDSCIDKSRCSKYGYYQECQDCCKKAGHNGGTCMFFKCKCA</sequence>
<evidence type="ECO:0000250" key="1">
    <source>
        <dbReference type="UniProtKB" id="Q86QT3"/>
    </source>
</evidence>
<evidence type="ECO:0000269" key="2">
    <source>
    </source>
</evidence>
<evidence type="ECO:0000269" key="3">
    <source>
    </source>
</evidence>
<evidence type="ECO:0000303" key="4">
    <source>
    </source>
</evidence>
<evidence type="ECO:0000305" key="5"/>
<evidence type="ECO:0000305" key="6">
    <source>
    </source>
</evidence>
<name>KGX18_CENEL</name>
<proteinExistence type="evidence at protein level"/>